<evidence type="ECO:0000255" key="1">
    <source>
        <dbReference type="HAMAP-Rule" id="MF_00105"/>
    </source>
</evidence>
<proteinExistence type="inferred from homology"/>
<feature type="chain" id="PRO_1000034277" description="Transcription elongation factor GreA">
    <location>
        <begin position="1"/>
        <end position="158"/>
    </location>
</feature>
<feature type="coiled-coil region" evidence="1">
    <location>
        <begin position="49"/>
        <end position="73"/>
    </location>
</feature>
<dbReference type="EMBL" id="AE017282">
    <property type="protein sequence ID" value="AAU91912.1"/>
    <property type="molecule type" value="Genomic_DNA"/>
</dbReference>
<dbReference type="RefSeq" id="WP_010961103.1">
    <property type="nucleotide sequence ID" value="NC_002977.6"/>
</dbReference>
<dbReference type="SMR" id="Q607B0"/>
<dbReference type="STRING" id="243233.MCA1851"/>
<dbReference type="GeneID" id="88224096"/>
<dbReference type="KEGG" id="mca:MCA1851"/>
<dbReference type="eggNOG" id="COG0782">
    <property type="taxonomic scope" value="Bacteria"/>
</dbReference>
<dbReference type="HOGENOM" id="CLU_101379_2_0_6"/>
<dbReference type="Proteomes" id="UP000006821">
    <property type="component" value="Chromosome"/>
</dbReference>
<dbReference type="GO" id="GO:0003677">
    <property type="term" value="F:DNA binding"/>
    <property type="evidence" value="ECO:0007669"/>
    <property type="project" value="UniProtKB-UniRule"/>
</dbReference>
<dbReference type="GO" id="GO:0070063">
    <property type="term" value="F:RNA polymerase binding"/>
    <property type="evidence" value="ECO:0007669"/>
    <property type="project" value="InterPro"/>
</dbReference>
<dbReference type="GO" id="GO:0006354">
    <property type="term" value="P:DNA-templated transcription elongation"/>
    <property type="evidence" value="ECO:0007669"/>
    <property type="project" value="TreeGrafter"/>
</dbReference>
<dbReference type="GO" id="GO:0032784">
    <property type="term" value="P:regulation of DNA-templated transcription elongation"/>
    <property type="evidence" value="ECO:0007669"/>
    <property type="project" value="UniProtKB-UniRule"/>
</dbReference>
<dbReference type="FunFam" id="1.10.287.180:FF:000001">
    <property type="entry name" value="Transcription elongation factor GreA"/>
    <property type="match status" value="1"/>
</dbReference>
<dbReference type="FunFam" id="3.10.50.30:FF:000001">
    <property type="entry name" value="Transcription elongation factor GreA"/>
    <property type="match status" value="1"/>
</dbReference>
<dbReference type="Gene3D" id="3.10.50.30">
    <property type="entry name" value="Transcription elongation factor, GreA/GreB, C-terminal domain"/>
    <property type="match status" value="1"/>
</dbReference>
<dbReference type="Gene3D" id="1.10.287.180">
    <property type="entry name" value="Transcription elongation factor, GreA/GreB, N-terminal domain"/>
    <property type="match status" value="1"/>
</dbReference>
<dbReference type="HAMAP" id="MF_00105">
    <property type="entry name" value="GreA_GreB"/>
    <property type="match status" value="1"/>
</dbReference>
<dbReference type="InterPro" id="IPR036953">
    <property type="entry name" value="GreA/GreB_C_sf"/>
</dbReference>
<dbReference type="InterPro" id="IPR018151">
    <property type="entry name" value="TF_GreA/GreB_CS"/>
</dbReference>
<dbReference type="InterPro" id="IPR006359">
    <property type="entry name" value="Tscrpt_elong_fac_GreA"/>
</dbReference>
<dbReference type="InterPro" id="IPR028624">
    <property type="entry name" value="Tscrpt_elong_fac_GreA/B"/>
</dbReference>
<dbReference type="InterPro" id="IPR001437">
    <property type="entry name" value="Tscrpt_elong_fac_GreA/B_C"/>
</dbReference>
<dbReference type="InterPro" id="IPR023459">
    <property type="entry name" value="Tscrpt_elong_fac_GreA/B_fam"/>
</dbReference>
<dbReference type="InterPro" id="IPR022691">
    <property type="entry name" value="Tscrpt_elong_fac_GreA/B_N"/>
</dbReference>
<dbReference type="InterPro" id="IPR036805">
    <property type="entry name" value="Tscrpt_elong_fac_GreA/B_N_sf"/>
</dbReference>
<dbReference type="NCBIfam" id="TIGR01462">
    <property type="entry name" value="greA"/>
    <property type="match status" value="1"/>
</dbReference>
<dbReference type="NCBIfam" id="NF001261">
    <property type="entry name" value="PRK00226.1-2"/>
    <property type="match status" value="1"/>
</dbReference>
<dbReference type="NCBIfam" id="NF001263">
    <property type="entry name" value="PRK00226.1-4"/>
    <property type="match status" value="1"/>
</dbReference>
<dbReference type="NCBIfam" id="NF001264">
    <property type="entry name" value="PRK00226.1-5"/>
    <property type="match status" value="1"/>
</dbReference>
<dbReference type="PANTHER" id="PTHR30437">
    <property type="entry name" value="TRANSCRIPTION ELONGATION FACTOR GREA"/>
    <property type="match status" value="1"/>
</dbReference>
<dbReference type="PANTHER" id="PTHR30437:SF4">
    <property type="entry name" value="TRANSCRIPTION ELONGATION FACTOR GREA"/>
    <property type="match status" value="1"/>
</dbReference>
<dbReference type="Pfam" id="PF01272">
    <property type="entry name" value="GreA_GreB"/>
    <property type="match status" value="1"/>
</dbReference>
<dbReference type="Pfam" id="PF03449">
    <property type="entry name" value="GreA_GreB_N"/>
    <property type="match status" value="1"/>
</dbReference>
<dbReference type="PIRSF" id="PIRSF006092">
    <property type="entry name" value="GreA_GreB"/>
    <property type="match status" value="1"/>
</dbReference>
<dbReference type="SUPFAM" id="SSF54534">
    <property type="entry name" value="FKBP-like"/>
    <property type="match status" value="1"/>
</dbReference>
<dbReference type="SUPFAM" id="SSF46557">
    <property type="entry name" value="GreA transcript cleavage protein, N-terminal domain"/>
    <property type="match status" value="1"/>
</dbReference>
<dbReference type="PROSITE" id="PS00829">
    <property type="entry name" value="GREAB_1"/>
    <property type="match status" value="1"/>
</dbReference>
<dbReference type="PROSITE" id="PS00830">
    <property type="entry name" value="GREAB_2"/>
    <property type="match status" value="1"/>
</dbReference>
<reference key="1">
    <citation type="journal article" date="2004" name="PLoS Biol.">
        <title>Genomic insights into methanotrophy: the complete genome sequence of Methylococcus capsulatus (Bath).</title>
        <authorList>
            <person name="Ward N.L."/>
            <person name="Larsen O."/>
            <person name="Sakwa J."/>
            <person name="Bruseth L."/>
            <person name="Khouri H.M."/>
            <person name="Durkin A.S."/>
            <person name="Dimitrov G."/>
            <person name="Jiang L."/>
            <person name="Scanlan D."/>
            <person name="Kang K.H."/>
            <person name="Lewis M.R."/>
            <person name="Nelson K.E."/>
            <person name="Methe B.A."/>
            <person name="Wu M."/>
            <person name="Heidelberg J.F."/>
            <person name="Paulsen I.T."/>
            <person name="Fouts D.E."/>
            <person name="Ravel J."/>
            <person name="Tettelin H."/>
            <person name="Ren Q."/>
            <person name="Read T.D."/>
            <person name="DeBoy R.T."/>
            <person name="Seshadri R."/>
            <person name="Salzberg S.L."/>
            <person name="Jensen H.B."/>
            <person name="Birkeland N.K."/>
            <person name="Nelson W.C."/>
            <person name="Dodson R.J."/>
            <person name="Grindhaug S.H."/>
            <person name="Holt I.E."/>
            <person name="Eidhammer I."/>
            <person name="Jonasen I."/>
            <person name="Vanaken S."/>
            <person name="Utterback T.R."/>
            <person name="Feldblyum T.V."/>
            <person name="Fraser C.M."/>
            <person name="Lillehaug J.R."/>
            <person name="Eisen J.A."/>
        </authorList>
    </citation>
    <scope>NUCLEOTIDE SEQUENCE [LARGE SCALE GENOMIC DNA]</scope>
    <source>
        <strain>ATCC 33009 / NCIMB 11132 / Bath</strain>
    </source>
</reference>
<accession>Q607B0</accession>
<name>GREA_METCA</name>
<keyword id="KW-0175">Coiled coil</keyword>
<keyword id="KW-0238">DNA-binding</keyword>
<keyword id="KW-1185">Reference proteome</keyword>
<keyword id="KW-0804">Transcription</keyword>
<keyword id="KW-0805">Transcription regulation</keyword>
<protein>
    <recommendedName>
        <fullName evidence="1">Transcription elongation factor GreA</fullName>
    </recommendedName>
    <alternativeName>
        <fullName evidence="1">Transcript cleavage factor GreA</fullName>
    </alternativeName>
</protein>
<organism>
    <name type="scientific">Methylococcus capsulatus (strain ATCC 33009 / NCIMB 11132 / Bath)</name>
    <dbReference type="NCBI Taxonomy" id="243233"/>
    <lineage>
        <taxon>Bacteria</taxon>
        <taxon>Pseudomonadati</taxon>
        <taxon>Pseudomonadota</taxon>
        <taxon>Gammaproteobacteria</taxon>
        <taxon>Methylococcales</taxon>
        <taxon>Methylococcaceae</taxon>
        <taxon>Methylococcus</taxon>
    </lineage>
</organism>
<sequence length="158" mass="17226">MNKTPMTTRGAEKLREELNHLKTVARPRVIEAIAEARAHGDLKENAEYQAAREQQGFIEGRIKEIEAKLANAQIIDVTRLNPGGKVVFGATAEIEDLASGEVVTYQIVGEDEAEIKEGRISVTSPIARALIGKQEGDVATVQAPGGTREYEIVSVRYV</sequence>
<comment type="function">
    <text evidence="1">Necessary for efficient RNA polymerase transcription elongation past template-encoded arresting sites. The arresting sites in DNA have the property of trapping a certain fraction of elongating RNA polymerases that pass through, resulting in locked ternary complexes. Cleavage of the nascent transcript by cleavage factors such as GreA or GreB allows the resumption of elongation from the new 3'terminus. GreA releases sequences of 2 to 3 nucleotides.</text>
</comment>
<comment type="similarity">
    <text evidence="1">Belongs to the GreA/GreB family.</text>
</comment>
<gene>
    <name evidence="1" type="primary">greA</name>
    <name type="ordered locus">MCA1851</name>
</gene>